<keyword id="KW-0007">Acetylation</keyword>
<keyword id="KW-1072">Activation of host autophagy by virus</keyword>
<keyword id="KW-0067">ATP-binding</keyword>
<keyword id="KW-0167">Capsid protein</keyword>
<keyword id="KW-1165">Clathrin-mediated endocytosis of virus by host</keyword>
<keyword id="KW-0165">Cleavage on pair of basic residues</keyword>
<keyword id="KW-1015">Disulfide bond</keyword>
<keyword id="KW-1170">Fusion of virus membrane with host endosomal membrane</keyword>
<keyword id="KW-1168">Fusion of virus membrane with host membrane</keyword>
<keyword id="KW-0325">Glycoprotein</keyword>
<keyword id="KW-0347">Helicase</keyword>
<keyword id="KW-1035">Host cytoplasm</keyword>
<keyword id="KW-1038">Host endoplasmic reticulum</keyword>
<keyword id="KW-1043">Host membrane</keyword>
<keyword id="KW-1045">Host mitochondrion</keyword>
<keyword id="KW-1048">Host nucleus</keyword>
<keyword id="KW-0945">Host-virus interaction</keyword>
<keyword id="KW-0378">Hydrolase</keyword>
<keyword id="KW-1090">Inhibition of host innate immune response by virus</keyword>
<keyword id="KW-1114">Inhibition of host interferon signaling pathway by virus</keyword>
<keyword id="KW-1097">Inhibition of host MAVS by virus</keyword>
<keyword id="KW-1113">Inhibition of host RLR pathway by virus</keyword>
<keyword id="KW-1106">Inhibition of host STAT2 by virus</keyword>
<keyword id="KW-1112">Inhibition of host TYK2 by virus</keyword>
<keyword id="KW-0922">Interferon antiviral system evasion</keyword>
<keyword id="KW-0407">Ion channel</keyword>
<keyword id="KW-0406">Ion transport</keyword>
<keyword id="KW-0472">Membrane</keyword>
<keyword id="KW-0479">Metal-binding</keyword>
<keyword id="KW-0489">Methyltransferase</keyword>
<keyword id="KW-0506">mRNA capping</keyword>
<keyword id="KW-0507">mRNA processing</keyword>
<keyword id="KW-0511">Multifunctional enzyme</keyword>
<keyword id="KW-0547">Nucleotide-binding</keyword>
<keyword id="KW-0548">Nucleotidyltransferase</keyword>
<keyword id="KW-0597">Phosphoprotein</keyword>
<keyword id="KW-0645">Protease</keyword>
<keyword id="KW-0694">RNA-binding</keyword>
<keyword id="KW-0696">RNA-directed RNA polymerase</keyword>
<keyword id="KW-0949">S-adenosyl-L-methionine</keyword>
<keyword id="KW-0964">Secreted</keyword>
<keyword id="KW-0720">Serine protease</keyword>
<keyword id="KW-0941">Suppressor of RNA silencing</keyword>
<keyword id="KW-0804">Transcription</keyword>
<keyword id="KW-0805">Transcription regulation</keyword>
<keyword id="KW-0808">Transferase</keyword>
<keyword id="KW-0812">Transmembrane</keyword>
<keyword id="KW-1133">Transmembrane helix</keyword>
<keyword id="KW-0813">Transport</keyword>
<keyword id="KW-0832">Ubl conjugation</keyword>
<keyword id="KW-1161">Viral attachment to host cell</keyword>
<keyword id="KW-0261">Viral envelope protein</keyword>
<keyword id="KW-0899">Viral immunoevasion</keyword>
<keyword id="KW-1182">Viral ion channel</keyword>
<keyword id="KW-1162">Viral penetration into host cytoplasm</keyword>
<keyword id="KW-0693">Viral RNA replication</keyword>
<keyword id="KW-0946">Virion</keyword>
<keyword id="KW-1164">Virus endocytosis by host</keyword>
<keyword id="KW-1160">Virus entry into host cell</keyword>
<keyword id="KW-0862">Zinc</keyword>
<evidence type="ECO:0000250" key="1">
    <source>
        <dbReference type="UniProtKB" id="P03314"/>
    </source>
</evidence>
<evidence type="ECO:0000250" key="2">
    <source>
        <dbReference type="UniProtKB" id="P09866"/>
    </source>
</evidence>
<evidence type="ECO:0000250" key="3">
    <source>
        <dbReference type="UniProtKB" id="P14335"/>
    </source>
</evidence>
<evidence type="ECO:0000250" key="4">
    <source>
        <dbReference type="UniProtKB" id="P14336"/>
    </source>
</evidence>
<evidence type="ECO:0000250" key="5">
    <source>
        <dbReference type="UniProtKB" id="P14340"/>
    </source>
</evidence>
<evidence type="ECO:0000250" key="6">
    <source>
        <dbReference type="UniProtKB" id="P17763"/>
    </source>
</evidence>
<evidence type="ECO:0000250" key="7">
    <source>
        <dbReference type="UniProtKB" id="P29990"/>
    </source>
</evidence>
<evidence type="ECO:0000250" key="8">
    <source>
        <dbReference type="UniProtKB" id="P29991"/>
    </source>
</evidence>
<evidence type="ECO:0000250" key="9">
    <source>
        <dbReference type="UniProtKB" id="Q32ZE1"/>
    </source>
</evidence>
<evidence type="ECO:0000250" key="10">
    <source>
        <dbReference type="UniProtKB" id="Q6YMS4"/>
    </source>
</evidence>
<evidence type="ECO:0000250" key="11">
    <source>
        <dbReference type="UniProtKB" id="Q9Q6P4"/>
    </source>
</evidence>
<evidence type="ECO:0000255" key="12"/>
<evidence type="ECO:0000255" key="13">
    <source>
        <dbReference type="PROSITE-ProRule" id="PRU00498"/>
    </source>
</evidence>
<evidence type="ECO:0000255" key="14">
    <source>
        <dbReference type="PROSITE-ProRule" id="PRU00539"/>
    </source>
</evidence>
<evidence type="ECO:0000255" key="15">
    <source>
        <dbReference type="PROSITE-ProRule" id="PRU00541"/>
    </source>
</evidence>
<evidence type="ECO:0000255" key="16">
    <source>
        <dbReference type="PROSITE-ProRule" id="PRU00859"/>
    </source>
</evidence>
<evidence type="ECO:0000255" key="17">
    <source>
        <dbReference type="PROSITE-ProRule" id="PRU00860"/>
    </source>
</evidence>
<evidence type="ECO:0000255" key="18">
    <source>
        <dbReference type="PROSITE-ProRule" id="PRU00924"/>
    </source>
</evidence>
<proteinExistence type="inferred from homology"/>
<protein>
    <recommendedName>
        <fullName>Genome polyprotein</fullName>
    </recommendedName>
    <component>
        <recommendedName>
            <fullName>Capsid protein C</fullName>
        </recommendedName>
        <alternativeName>
            <fullName>Core protein</fullName>
        </alternativeName>
    </component>
    <component>
        <recommendedName>
            <fullName>Protein prM</fullName>
        </recommendedName>
    </component>
    <component>
        <recommendedName>
            <fullName>Peptide pr</fullName>
        </recommendedName>
    </component>
    <component>
        <recommendedName>
            <fullName>Small envelope protein M</fullName>
        </recommendedName>
        <alternativeName>
            <fullName>Matrix protein</fullName>
        </alternativeName>
    </component>
    <component>
        <recommendedName>
            <fullName>Envelope protein E</fullName>
        </recommendedName>
    </component>
    <component>
        <recommendedName>
            <fullName>Non-structural protein 1</fullName>
            <shortName>NS1</shortName>
        </recommendedName>
    </component>
    <component>
        <recommendedName>
            <fullName>Non-structural protein 2A</fullName>
            <shortName>NS2A</shortName>
        </recommendedName>
    </component>
    <component>
        <recommendedName>
            <fullName>Serine protease subunit NS2B</fullName>
        </recommendedName>
        <alternativeName>
            <fullName>Flavivirin protease NS2B regulatory subunit</fullName>
        </alternativeName>
        <alternativeName>
            <fullName>Non-structural protein 2B</fullName>
        </alternativeName>
    </component>
    <component>
        <recommendedName>
            <fullName>Serine protease NS3</fullName>
            <ecNumber>3.4.21.91</ecNumber>
            <ecNumber evidence="11">3.6.1.15</ecNumber>
            <ecNumber evidence="11">3.6.4.13</ecNumber>
        </recommendedName>
        <alternativeName>
            <fullName>Flavivirin protease NS3 catalytic subunit</fullName>
        </alternativeName>
        <alternativeName>
            <fullName>Non-structural protein 3</fullName>
        </alternativeName>
    </component>
    <component>
        <recommendedName>
            <fullName>Non-structural protein 4A</fullName>
            <shortName>NS4A</shortName>
        </recommendedName>
    </component>
    <component>
        <recommendedName>
            <fullName>Peptide 2k</fullName>
        </recommendedName>
    </component>
    <component>
        <recommendedName>
            <fullName>Non-structural protein 4B</fullName>
            <shortName>NS4B</shortName>
        </recommendedName>
    </component>
    <component>
        <recommendedName>
            <fullName>RNA-directed RNA polymerase NS5</fullName>
            <ecNumber evidence="18">2.1.1.56</ecNumber>
            <ecNumber evidence="18">2.1.1.57</ecNumber>
            <ecNumber evidence="14">2.7.7.48</ecNumber>
        </recommendedName>
        <alternativeName>
            <fullName>Non-structural protein 5</fullName>
        </alternativeName>
    </component>
</protein>
<sequence>MNQRKKVVRPPFNMLKRERNRVSTPQGLVKRFSIGLFSGKGPLRMVLAFITFLRVLSIPPTAGILKRWGQLKKTKAIKILTGFRKEIGRMLNILNGRKRSTVTLLCLIPTVMAFHLSTRDGEPLMIVAKHERGRPLLFKTTEGINKCTLIAMDLGEMCEDTVTYKCPLLVNTEPEDIDCWCNLTSTWVMYGTCTQNGERRREKRSVALTPHSGMGLETRAETWMSSEGAWKHAQRVESWILRNPGFALLAGFMAYMIGQTGIQRTVFFVLMMLVAPSYGMRCIGVGNRDFVEGVSGGAWVDLVLEHGGCVTTMAQGKPTLDFELIKTTAKEVALLRTYCIEASISNITTATRCPTQGEPYLKEEQDQQYICRRDVVDRGWGNGCGLFGKGGVVTCAKFSCSGKITGNLVQIENLEYTVVVTVHNGDTHAVGNDTSNHGVTATITPRSPSVEVELPDYGELSLDCEPRSGIDFNEMILMKMEKKTWLVHKQWFLDLPLPWTAGADTSEVHWNHKERMVTFKVPHAKRQDVTVLGSQEGAMHSALTGATEVDSGDGNHMFAGHLKCKVRMEKLRIKGMSYTMCSGKFSIDREMAETQHGTTVVKVKYEGTGAPCKVPIEIRDVNKEKVVGRIISSTPFAENTNSVTNIELEPPFGDSYIVIGVGDSALTLHWFRKGSSIGKMFESTYRGAKRMAILGETAWDFGSVGGLFTSLGKAVHQVFGSVYTTMFGGVSWMVRILIGLLVLWIGTNSRNTPMAMTCIAVGGITLFLGFTVQADMGCVVSWTGKELKCGSGIFVTDNVHTWTEQYQFQPESPARLASAILNAHKDGVCGIRSTTRLENVMWKQITNELNYVLWEGGHDLTVVAGDVKGVLVKGKRALTPPVNDLKYSWKTWGKAKIFTPEAKNSTFLIDGPDTSECPNERRAWNFLEVEDYGFGMFTTSIWMKFREGSSEVCDHRLMSAAIKDQKAVHADMGYWLESSKNQTWQIEKASLIEVKTCLWPKTHTLWSNGVLESQMLIPKAYAGPFSQHNYRQGYATQTMGPWHLGKLEIDFGECPGTTVTIQEDCDHRGPSLRTTTASGKLVTQWCCRSCTMPPLRFLGEDGCWYGMEIRPLSEREENMVKSQVSAGQGSSETFSMGLLCLTLFIEECLRRKVTRKHMILVVVTTFCAIILGGLTWMDLLRAIIMLGDTMLSRVGGQTHLAIMIVFKMSPGYVLGVFLRKLTSRETALMVIGMAMTTVFSIPHDLMELIDGISLGLILLKMVTHFDNTQVGTLALSLTFIRSTMPLTMAWRTIMAVLFAVTLIPLCRTSCLQKQSHWVEITAIILGAQALPVYLMTLMKGASKRSWPLNEGIMAVGLVSLLGSALLKNDVPLAGPMVAGGLLLAAYVMSGSSADLSLERAANVQWDEMADITGSSPIIEVKQDEDGSFSIRDVEETNMITLLVKLALITVSGLYPLAIPITMTLWYMWQVRTQRSGALWDVPSPATAQKATLTEGVYRIMQRGLLGRTQVGVGIHMEGVFHTMWHVTRGSVICHETGRLEPSWADVRNDMISYGGGWRLGDKWDKEEDVQVLAIEPGKNPKHVQTKPGLFKTLTGEIGAVTLDFKPGTSGSPIINKKGKVIGLYGNGVVTKSGDYVSAITQAERIGEPDYEVDEDIFRKKRLTIMDLHPGAGKTKRILPSIVREALKRRLRTLILAPTRVVAAEMEEALRGLPIRYQTPAVKSEHTGREIVDLMCHATFTTRLLSSTRVPNYNLIVMDEAHFTDPSSVAARGYISTRVEMGEAAAIFMTATPPGATDPFPQSNSPIEDIEREIPERSWNTGFDWITDYQGKTVWFVPSIKAGNDIANCLRKSGKKVIQLSRKTFDTEYPKTKLTDWDFVVTTDISEMGANFRAGRVIDPRRCLKPVILTDGPERVILAGPIPVTPASAAQRRGRIGRNPAQEDDQYVFSGDPLKNDEDHAHWTEAKMLLDNIYTPEGIIPTLFGPEREKTQAIDGEFRLRGEQRKTFVELMKRGDLPVWLSYKVASAGISYKDREWCFTGERNNQILEENMEVEIWTREGEKKKLRPKWLDARVYADPMALKDFKEFASGRKSITLDILTEIASLPTYLSSRAKLALDNIVMLHTTERGGRAYQHALNELPESLETLMLVALLGAMTAGIFLFFMQGKGIGKLSVGLIAIAVASGLLWVAEIQPQWIAASIILEFFLMVLLIPEPEKQRTPQDNQLIYVILAILTIIGLVAANEMGLIEKTKADFGFYQVKTETTILDVDLRPASAWTLYAVATTILTPMLRHTIENTSANLSLAAIANQAAVLMGLGKGWPLHRMDLGVPLLAMGCYSQVNPTTLTASLVMLLVHYAIIGPGLQAKATREAQKRTAAGIMKNPTVDGITVIDLEPISYDPKFEKQLGQVMLLVLCAGQLLLMRTTWAFCEVLTLATGPVLTLWEGNPGRFWNTTIAVSTANIFRGSYLAGAGLAFSLIKNAQTPRRGTGTTGETLGEKWKRQLNSLDRKEFEEYKRSGILEVDRTEAKSALKDGSKIKHAVSRGSSKIRWIVERGMVKPKGKVVDLGCGRGGWSYYMATLKNVTEVKGYTKGGPGHEEPIPMATYGWNLVKLHSGVDVFYKPTEQVDTLLCDIGESSSNPTIEEGRTLRVLKMVEPWLSSKPEFCIKVLNPYMPTVIEELEKLQRKHGGSLIRCPLSRNSTHEMYWVSGASGNIVSSVNTTSKMLLNRFTTRHRKPTYEKDVDLGAGTRSVSTETEKPDMTIIGRRLQRLQEEHKETWHYDQENPYRTWAYHGSYEAPSTGSASSMVNGVVKLLTKPWDVIPMVTQLAMTDTTPFGQQRVFKEKVDTRTPQPKLGTRVVMTTTANWLWALLGRKKNPRLCTREEFISKVRSNAAIGAVFQEEQGWTSASEAVNDSRFWELVDKERALHQEGKCESCVYNMMGKREKKLGEFGRAKGSRAIWYMWLGARFLEFEALGFLNEDHWFGRENSWSGVEGEGLHRLGYILEDIDRKDGDLMYADDTAGWDTRITEDDLLNEELITEQMAPHHRILAKAIFKLTYQNKVVKVLRPTPKGAVMDIISRKDQRGSGQVGTYGLNTFTNMEVQLIRQMEAEGVITQDDMQNPKGLKERVEKWLKECGVDRLKRMAISGDDCVVKPLDERFSTSLLFLNDMGKVRKDIPQWEPSKGWKNWQEVPFCSHHFHKIFMKDGRSLVVPCRNQDELIGRARISQGAGWSLKETACLGKAYAQMWSLMYFHRRDLRLASMAICSAVPTEWFPTSRTTWSIHAHHQWMTTEDMLKVWNRVWIEDNPNMTDKTPVHSWEDIPYLGKREDLWCGSLIGLSSRATWAKNIHTAITQVRNLIGKEEYVDYMPVMRRYSALSESEGVL</sequence>
<name>POLG_DEN4H</name>
<reference key="1">
    <citation type="journal article" date="2004" name="Virology">
        <title>The molecular epidemiology of dengue virus serotype 4 in Bangkok, Thailand.</title>
        <authorList>
            <person name="Klungthong C."/>
            <person name="Zhang C."/>
            <person name="Mammen M.P. Jr."/>
            <person name="Ubol S."/>
            <person name="Holmes E.C."/>
        </authorList>
    </citation>
    <scope>NUCLEOTIDE SEQUENCE [GENOMIC RNA]</scope>
</reference>
<organismHost>
    <name type="scientific">Aedes aegypti</name>
    <name type="common">Yellowfever mosquito</name>
    <name type="synonym">Culex aegypti</name>
    <dbReference type="NCBI Taxonomy" id="7159"/>
</organismHost>
<organismHost>
    <name type="scientific">Aedes albopictus</name>
    <name type="common">Asian tiger mosquito</name>
    <name type="synonym">Stegomyia albopicta</name>
    <dbReference type="NCBI Taxonomy" id="7160"/>
</organismHost>
<organismHost>
    <name type="scientific">Aedes polynesiensis</name>
    <name type="common">Polynesian tiger mosquito</name>
    <dbReference type="NCBI Taxonomy" id="188700"/>
</organismHost>
<organismHost>
    <name type="scientific">Homo sapiens</name>
    <name type="common">Human</name>
    <dbReference type="NCBI Taxonomy" id="9606"/>
</organismHost>
<dbReference type="EC" id="3.4.21.91"/>
<dbReference type="EC" id="3.6.1.15" evidence="11"/>
<dbReference type="EC" id="3.6.4.13" evidence="11"/>
<dbReference type="EC" id="2.1.1.56" evidence="18"/>
<dbReference type="EC" id="2.1.1.57" evidence="18"/>
<dbReference type="EC" id="2.7.7.48" evidence="14"/>
<dbReference type="EMBL" id="AY618988">
    <property type="protein sequence ID" value="AAU89375.1"/>
    <property type="molecule type" value="Genomic_RNA"/>
</dbReference>
<dbReference type="SMR" id="Q2YHF2"/>
<dbReference type="MEROPS" id="S07.001"/>
<dbReference type="PRO" id="PR:Q2YHF2"/>
<dbReference type="Proteomes" id="UP000007201">
    <property type="component" value="Genome"/>
</dbReference>
<dbReference type="GO" id="GO:0005576">
    <property type="term" value="C:extracellular region"/>
    <property type="evidence" value="ECO:0007669"/>
    <property type="project" value="UniProtKB-SubCell"/>
</dbReference>
<dbReference type="GO" id="GO:0044167">
    <property type="term" value="C:host cell endoplasmic reticulum membrane"/>
    <property type="evidence" value="ECO:0007669"/>
    <property type="project" value="UniProtKB-SubCell"/>
</dbReference>
<dbReference type="GO" id="GO:0033650">
    <property type="term" value="C:host cell mitochondrion"/>
    <property type="evidence" value="ECO:0007669"/>
    <property type="project" value="UniProtKB-SubCell"/>
</dbReference>
<dbReference type="GO" id="GO:0042025">
    <property type="term" value="C:host cell nucleus"/>
    <property type="evidence" value="ECO:0007669"/>
    <property type="project" value="UniProtKB-SubCell"/>
</dbReference>
<dbReference type="GO" id="GO:0044220">
    <property type="term" value="C:host cell perinuclear region of cytoplasm"/>
    <property type="evidence" value="ECO:0007669"/>
    <property type="project" value="UniProtKB-SubCell"/>
</dbReference>
<dbReference type="GO" id="GO:0016020">
    <property type="term" value="C:membrane"/>
    <property type="evidence" value="ECO:0007669"/>
    <property type="project" value="UniProtKB-KW"/>
</dbReference>
<dbReference type="GO" id="GO:0019028">
    <property type="term" value="C:viral capsid"/>
    <property type="evidence" value="ECO:0007669"/>
    <property type="project" value="UniProtKB-KW"/>
</dbReference>
<dbReference type="GO" id="GO:0019031">
    <property type="term" value="C:viral envelope"/>
    <property type="evidence" value="ECO:0007669"/>
    <property type="project" value="UniProtKB-KW"/>
</dbReference>
<dbReference type="GO" id="GO:0055036">
    <property type="term" value="C:virion membrane"/>
    <property type="evidence" value="ECO:0007669"/>
    <property type="project" value="UniProtKB-SubCell"/>
</dbReference>
<dbReference type="GO" id="GO:0005524">
    <property type="term" value="F:ATP binding"/>
    <property type="evidence" value="ECO:0007669"/>
    <property type="project" value="UniProtKB-KW"/>
</dbReference>
<dbReference type="GO" id="GO:0016887">
    <property type="term" value="F:ATP hydrolysis activity"/>
    <property type="evidence" value="ECO:0007669"/>
    <property type="project" value="RHEA"/>
</dbReference>
<dbReference type="GO" id="GO:0015267">
    <property type="term" value="F:channel activity"/>
    <property type="evidence" value="ECO:0007669"/>
    <property type="project" value="UniProtKB-KW"/>
</dbReference>
<dbReference type="GO" id="GO:0003725">
    <property type="term" value="F:double-stranded RNA binding"/>
    <property type="evidence" value="ECO:0007669"/>
    <property type="project" value="InterPro"/>
</dbReference>
<dbReference type="GO" id="GO:0046872">
    <property type="term" value="F:metal ion binding"/>
    <property type="evidence" value="ECO:0007669"/>
    <property type="project" value="UniProtKB-KW"/>
</dbReference>
<dbReference type="GO" id="GO:0004483">
    <property type="term" value="F:mRNA (nucleoside-2'-O-)-methyltransferase activity"/>
    <property type="evidence" value="ECO:0007669"/>
    <property type="project" value="UniProtKB-EC"/>
</dbReference>
<dbReference type="GO" id="GO:0004482">
    <property type="term" value="F:mRNA 5'-cap (guanine-N7-)-methyltransferase activity"/>
    <property type="evidence" value="ECO:0007669"/>
    <property type="project" value="UniProtKB-EC"/>
</dbReference>
<dbReference type="GO" id="GO:0046983">
    <property type="term" value="F:protein dimerization activity"/>
    <property type="evidence" value="ECO:0007669"/>
    <property type="project" value="InterPro"/>
</dbReference>
<dbReference type="GO" id="GO:0003724">
    <property type="term" value="F:RNA helicase activity"/>
    <property type="evidence" value="ECO:0007669"/>
    <property type="project" value="UniProtKB-EC"/>
</dbReference>
<dbReference type="GO" id="GO:0003968">
    <property type="term" value="F:RNA-directed RNA polymerase activity"/>
    <property type="evidence" value="ECO:0007669"/>
    <property type="project" value="UniProtKB-KW"/>
</dbReference>
<dbReference type="GO" id="GO:0004252">
    <property type="term" value="F:serine-type endopeptidase activity"/>
    <property type="evidence" value="ECO:0007669"/>
    <property type="project" value="InterPro"/>
</dbReference>
<dbReference type="GO" id="GO:0005198">
    <property type="term" value="F:structural molecule activity"/>
    <property type="evidence" value="ECO:0007669"/>
    <property type="project" value="InterPro"/>
</dbReference>
<dbReference type="GO" id="GO:0075512">
    <property type="term" value="P:clathrin-dependent endocytosis of virus by host cell"/>
    <property type="evidence" value="ECO:0007669"/>
    <property type="project" value="UniProtKB-KW"/>
</dbReference>
<dbReference type="GO" id="GO:0039654">
    <property type="term" value="P:fusion of virus membrane with host endosome membrane"/>
    <property type="evidence" value="ECO:0007669"/>
    <property type="project" value="UniProtKB-KW"/>
</dbReference>
<dbReference type="GO" id="GO:0034220">
    <property type="term" value="P:monoatomic ion transmembrane transport"/>
    <property type="evidence" value="ECO:0007669"/>
    <property type="project" value="UniProtKB-KW"/>
</dbReference>
<dbReference type="GO" id="GO:0006508">
    <property type="term" value="P:proteolysis"/>
    <property type="evidence" value="ECO:0007669"/>
    <property type="project" value="UniProtKB-KW"/>
</dbReference>
<dbReference type="GO" id="GO:0039520">
    <property type="term" value="P:symbiont-mediated activation of host autophagy"/>
    <property type="evidence" value="ECO:0007669"/>
    <property type="project" value="UniProtKB-KW"/>
</dbReference>
<dbReference type="GO" id="GO:0039545">
    <property type="term" value="P:symbiont-mediated suppression of host cytoplasmic pattern recognition receptor signaling pathway via inhibition of MAVS activity"/>
    <property type="evidence" value="ECO:0007669"/>
    <property type="project" value="UniProtKB-KW"/>
</dbReference>
<dbReference type="GO" id="GO:0039574">
    <property type="term" value="P:symbiont-mediated suppression of host JAK-STAT cascade via inhibition of host TYK2 activity"/>
    <property type="evidence" value="ECO:0007669"/>
    <property type="project" value="UniProtKB-KW"/>
</dbReference>
<dbReference type="GO" id="GO:0039564">
    <property type="term" value="P:symbiont-mediated suppression of host JAK-STAT cascade via inhibition of STAT2 activity"/>
    <property type="evidence" value="ECO:0007669"/>
    <property type="project" value="UniProtKB-KW"/>
</dbReference>
<dbReference type="GO" id="GO:0039502">
    <property type="term" value="P:symbiont-mediated suppression of host type I interferon-mediated signaling pathway"/>
    <property type="evidence" value="ECO:0007669"/>
    <property type="project" value="UniProtKB-KW"/>
</dbReference>
<dbReference type="GO" id="GO:0039694">
    <property type="term" value="P:viral RNA genome replication"/>
    <property type="evidence" value="ECO:0007669"/>
    <property type="project" value="InterPro"/>
</dbReference>
<dbReference type="GO" id="GO:0019062">
    <property type="term" value="P:virion attachment to host cell"/>
    <property type="evidence" value="ECO:0007669"/>
    <property type="project" value="UniProtKB-KW"/>
</dbReference>
<dbReference type="CDD" id="cd20761">
    <property type="entry name" value="capping_2-OMTase_Flaviviridae"/>
    <property type="match status" value="1"/>
</dbReference>
<dbReference type="CDD" id="cd17931">
    <property type="entry name" value="DEXHc_viral_Ns3"/>
    <property type="match status" value="1"/>
</dbReference>
<dbReference type="CDD" id="cd12149">
    <property type="entry name" value="Flavi_E_C"/>
    <property type="match status" value="1"/>
</dbReference>
<dbReference type="CDD" id="cd17038">
    <property type="entry name" value="Flavi_M"/>
    <property type="match status" value="1"/>
</dbReference>
<dbReference type="CDD" id="cd23204">
    <property type="entry name" value="Flavivirus_RdRp"/>
    <property type="match status" value="1"/>
</dbReference>
<dbReference type="CDD" id="cd18806">
    <property type="entry name" value="SF2_C_viral"/>
    <property type="match status" value="1"/>
</dbReference>
<dbReference type="FunFam" id="1.20.1280.260:FF:000001">
    <property type="entry name" value="Envelope glycoprotein"/>
    <property type="match status" value="1"/>
</dbReference>
<dbReference type="FunFam" id="2.60.40.350:FF:000001">
    <property type="entry name" value="Envelope glycoprotein"/>
    <property type="match status" value="1"/>
</dbReference>
<dbReference type="FunFam" id="1.10.10.930:FF:000001">
    <property type="entry name" value="Genome polyprotein"/>
    <property type="match status" value="1"/>
</dbReference>
<dbReference type="FunFam" id="1.10.260.90:FF:000001">
    <property type="entry name" value="Genome polyprotein"/>
    <property type="match status" value="1"/>
</dbReference>
<dbReference type="FunFam" id="1.10.8.970:FF:000002">
    <property type="entry name" value="Genome polyprotein"/>
    <property type="match status" value="1"/>
</dbReference>
<dbReference type="FunFam" id="2.60.260.50:FF:000001">
    <property type="entry name" value="Genome polyprotein"/>
    <property type="match status" value="1"/>
</dbReference>
<dbReference type="FunFam" id="3.30.70.2840:FF:000001">
    <property type="entry name" value="Genome polyprotein"/>
    <property type="match status" value="1"/>
</dbReference>
<dbReference type="FunFam" id="3.30.70.2840:FF:000002">
    <property type="entry name" value="Genome polyprotein"/>
    <property type="match status" value="1"/>
</dbReference>
<dbReference type="FunFam" id="3.30.70.2840:FF:000004">
    <property type="entry name" value="Genome polyprotein"/>
    <property type="match status" value="1"/>
</dbReference>
<dbReference type="FunFam" id="3.40.50.150:FF:000105">
    <property type="entry name" value="Genome polyprotein"/>
    <property type="match status" value="1"/>
</dbReference>
<dbReference type="FunFam" id="3.40.50.300:FF:000763">
    <property type="entry name" value="Genome polyprotein"/>
    <property type="match status" value="1"/>
</dbReference>
<dbReference type="Gene3D" id="1.10.10.930">
    <property type="match status" value="1"/>
</dbReference>
<dbReference type="Gene3D" id="1.10.260.90">
    <property type="match status" value="1"/>
</dbReference>
<dbReference type="Gene3D" id="1.20.1280.260">
    <property type="match status" value="1"/>
</dbReference>
<dbReference type="Gene3D" id="2.40.10.120">
    <property type="match status" value="2"/>
</dbReference>
<dbReference type="Gene3D" id="2.60.40.350">
    <property type="match status" value="1"/>
</dbReference>
<dbReference type="Gene3D" id="1.10.8.970">
    <property type="entry name" value="Flavivirus envelope glycoprotein M-like"/>
    <property type="match status" value="1"/>
</dbReference>
<dbReference type="Gene3D" id="2.60.260.50">
    <property type="entry name" value="Flavivirus polyprotein propeptide domain"/>
    <property type="match status" value="1"/>
</dbReference>
<dbReference type="Gene3D" id="3.30.70.2840">
    <property type="entry name" value="Flavivirus RNA-directed RNA polymerase, thumb domain"/>
    <property type="match status" value="3"/>
</dbReference>
<dbReference type="Gene3D" id="3.40.50.300">
    <property type="entry name" value="P-loop containing nucleotide triphosphate hydrolases"/>
    <property type="match status" value="2"/>
</dbReference>
<dbReference type="Gene3D" id="2.60.98.10">
    <property type="entry name" value="Tick-borne Encephalitis virus Glycoprotein, domain 1"/>
    <property type="match status" value="1"/>
</dbReference>
<dbReference type="Gene3D" id="2.40.10.10">
    <property type="entry name" value="Trypsin-like serine proteases"/>
    <property type="match status" value="1"/>
</dbReference>
<dbReference type="Gene3D" id="3.40.50.150">
    <property type="entry name" value="Vaccinia Virus protein VP39"/>
    <property type="match status" value="1"/>
</dbReference>
<dbReference type="Gene3D" id="3.30.67.10">
    <property type="entry name" value="Viral Envelope Glycoprotein, domain 2"/>
    <property type="match status" value="1"/>
</dbReference>
<dbReference type="Gene3D" id="3.30.387.10">
    <property type="entry name" value="Viral Envelope Glycoprotein, domain 3"/>
    <property type="match status" value="1"/>
</dbReference>
<dbReference type="InterPro" id="IPR043502">
    <property type="entry name" value="DNA/RNA_pol_sf"/>
</dbReference>
<dbReference type="InterPro" id="IPR000069">
    <property type="entry name" value="Env_glycoprot_M_flavivir"/>
</dbReference>
<dbReference type="InterPro" id="IPR038302">
    <property type="entry name" value="Env_glycoprot_M_sf_flavivir"/>
</dbReference>
<dbReference type="InterPro" id="IPR013755">
    <property type="entry name" value="Flav_gly_cen_dom_subdom1"/>
</dbReference>
<dbReference type="InterPro" id="IPR001122">
    <property type="entry name" value="Flavi_capsidC"/>
</dbReference>
<dbReference type="InterPro" id="IPR037172">
    <property type="entry name" value="Flavi_capsidC_sf"/>
</dbReference>
<dbReference type="InterPro" id="IPR011492">
    <property type="entry name" value="Flavi_DEAD"/>
</dbReference>
<dbReference type="InterPro" id="IPR027287">
    <property type="entry name" value="Flavi_E_Ig-like"/>
</dbReference>
<dbReference type="InterPro" id="IPR026470">
    <property type="entry name" value="Flavi_E_Stem/Anchor_dom"/>
</dbReference>
<dbReference type="InterPro" id="IPR038345">
    <property type="entry name" value="Flavi_E_Stem/Anchor_dom_sf"/>
</dbReference>
<dbReference type="InterPro" id="IPR011998">
    <property type="entry name" value="Flavi_Glycoprot_E_cen/dimer"/>
</dbReference>
<dbReference type="InterPro" id="IPR001157">
    <property type="entry name" value="Flavi_NS1"/>
</dbReference>
<dbReference type="InterPro" id="IPR000752">
    <property type="entry name" value="Flavi_NS2A"/>
</dbReference>
<dbReference type="InterPro" id="IPR000487">
    <property type="entry name" value="Flavi_NS2B"/>
</dbReference>
<dbReference type="InterPro" id="IPR001850">
    <property type="entry name" value="Flavi_NS3_S7"/>
</dbReference>
<dbReference type="InterPro" id="IPR000404">
    <property type="entry name" value="Flavi_NS4A"/>
</dbReference>
<dbReference type="InterPro" id="IPR001528">
    <property type="entry name" value="Flavi_NS4B"/>
</dbReference>
<dbReference type="InterPro" id="IPR046811">
    <property type="entry name" value="Flavi_NS5_thumb"/>
</dbReference>
<dbReference type="InterPro" id="IPR002535">
    <property type="entry name" value="Flavi_propep"/>
</dbReference>
<dbReference type="InterPro" id="IPR038688">
    <property type="entry name" value="Flavi_propep_sf"/>
</dbReference>
<dbReference type="InterPro" id="IPR047530">
    <property type="entry name" value="Flavi_RdRp"/>
</dbReference>
<dbReference type="InterPro" id="IPR000208">
    <property type="entry name" value="Flavi_RdRp_fingers/palm"/>
</dbReference>
<dbReference type="InterPro" id="IPR000336">
    <property type="entry name" value="Flavivir/Alphavir_Ig-like_sf"/>
</dbReference>
<dbReference type="InterPro" id="IPR014412">
    <property type="entry name" value="Gen_Poly_FLV"/>
</dbReference>
<dbReference type="InterPro" id="IPR036253">
    <property type="entry name" value="Glycoprot_cen/dimer_sf"/>
</dbReference>
<dbReference type="InterPro" id="IPR038055">
    <property type="entry name" value="Glycoprot_E_dimer_dom"/>
</dbReference>
<dbReference type="InterPro" id="IPR013756">
    <property type="entry name" value="GlyE_cen_dom_subdom2"/>
</dbReference>
<dbReference type="InterPro" id="IPR014001">
    <property type="entry name" value="Helicase_ATP-bd"/>
</dbReference>
<dbReference type="InterPro" id="IPR001650">
    <property type="entry name" value="Helicase_C-like"/>
</dbReference>
<dbReference type="InterPro" id="IPR014756">
    <property type="entry name" value="Ig_E-set"/>
</dbReference>
<dbReference type="InterPro" id="IPR026490">
    <property type="entry name" value="mRNA_cap_0/1_MeTrfase"/>
</dbReference>
<dbReference type="InterPro" id="IPR049486">
    <property type="entry name" value="NS3-hel_C_flaviviridae"/>
</dbReference>
<dbReference type="InterPro" id="IPR027417">
    <property type="entry name" value="P-loop_NTPase"/>
</dbReference>
<dbReference type="InterPro" id="IPR009003">
    <property type="entry name" value="Peptidase_S1_PA"/>
</dbReference>
<dbReference type="InterPro" id="IPR043504">
    <property type="entry name" value="Peptidase_S1_PA_chymotrypsin"/>
</dbReference>
<dbReference type="InterPro" id="IPR007094">
    <property type="entry name" value="RNA-dir_pol_PSvirus"/>
</dbReference>
<dbReference type="InterPro" id="IPR002877">
    <property type="entry name" value="RNA_MeTrfase_FtsJ_dom"/>
</dbReference>
<dbReference type="InterPro" id="IPR029063">
    <property type="entry name" value="SAM-dependent_MTases_sf"/>
</dbReference>
<dbReference type="NCBIfam" id="TIGR04240">
    <property type="entry name" value="flavi_E_stem"/>
    <property type="match status" value="1"/>
</dbReference>
<dbReference type="Pfam" id="PF20907">
    <property type="entry name" value="Flav_NS3-hel_C"/>
    <property type="match status" value="1"/>
</dbReference>
<dbReference type="Pfam" id="PF01003">
    <property type="entry name" value="Flavi_capsid"/>
    <property type="match status" value="1"/>
</dbReference>
<dbReference type="Pfam" id="PF07652">
    <property type="entry name" value="Flavi_DEAD"/>
    <property type="match status" value="1"/>
</dbReference>
<dbReference type="Pfam" id="PF21659">
    <property type="entry name" value="Flavi_E_stem"/>
    <property type="match status" value="1"/>
</dbReference>
<dbReference type="Pfam" id="PF02832">
    <property type="entry name" value="Flavi_glycop_C"/>
    <property type="match status" value="1"/>
</dbReference>
<dbReference type="Pfam" id="PF00869">
    <property type="entry name" value="Flavi_glycoprot"/>
    <property type="match status" value="1"/>
</dbReference>
<dbReference type="Pfam" id="PF01004">
    <property type="entry name" value="Flavi_M"/>
    <property type="match status" value="1"/>
</dbReference>
<dbReference type="Pfam" id="PF00948">
    <property type="entry name" value="Flavi_NS1"/>
    <property type="match status" value="1"/>
</dbReference>
<dbReference type="Pfam" id="PF01005">
    <property type="entry name" value="Flavi_NS2A"/>
    <property type="match status" value="1"/>
</dbReference>
<dbReference type="Pfam" id="PF01002">
    <property type="entry name" value="Flavi_NS2B"/>
    <property type="match status" value="1"/>
</dbReference>
<dbReference type="Pfam" id="PF01350">
    <property type="entry name" value="Flavi_NS4A"/>
    <property type="match status" value="1"/>
</dbReference>
<dbReference type="Pfam" id="PF01349">
    <property type="entry name" value="Flavi_NS4B"/>
    <property type="match status" value="1"/>
</dbReference>
<dbReference type="Pfam" id="PF00972">
    <property type="entry name" value="Flavi_NS5"/>
    <property type="match status" value="1"/>
</dbReference>
<dbReference type="Pfam" id="PF20483">
    <property type="entry name" value="Flavi_NS5_thumb"/>
    <property type="match status" value="1"/>
</dbReference>
<dbReference type="Pfam" id="PF01570">
    <property type="entry name" value="Flavi_propep"/>
    <property type="match status" value="1"/>
</dbReference>
<dbReference type="Pfam" id="PF01728">
    <property type="entry name" value="FtsJ"/>
    <property type="match status" value="1"/>
</dbReference>
<dbReference type="Pfam" id="PF00949">
    <property type="entry name" value="Peptidase_S7"/>
    <property type="match status" value="1"/>
</dbReference>
<dbReference type="PIRSF" id="PIRSF003817">
    <property type="entry name" value="Gen_Poly_FLV"/>
    <property type="match status" value="1"/>
</dbReference>
<dbReference type="SMART" id="SM00487">
    <property type="entry name" value="DEXDc"/>
    <property type="match status" value="1"/>
</dbReference>
<dbReference type="SMART" id="SM00490">
    <property type="entry name" value="HELICc"/>
    <property type="match status" value="1"/>
</dbReference>
<dbReference type="SUPFAM" id="SSF56672">
    <property type="entry name" value="DNA/RNA polymerases"/>
    <property type="match status" value="1"/>
</dbReference>
<dbReference type="SUPFAM" id="SSF81296">
    <property type="entry name" value="E set domains"/>
    <property type="match status" value="1"/>
</dbReference>
<dbReference type="SUPFAM" id="SSF101257">
    <property type="entry name" value="Flavivirus capsid protein C"/>
    <property type="match status" value="1"/>
</dbReference>
<dbReference type="SUPFAM" id="SSF52540">
    <property type="entry name" value="P-loop containing nucleoside triphosphate hydrolases"/>
    <property type="match status" value="2"/>
</dbReference>
<dbReference type="SUPFAM" id="SSF53335">
    <property type="entry name" value="S-adenosyl-L-methionine-dependent methyltransferases"/>
    <property type="match status" value="1"/>
</dbReference>
<dbReference type="SUPFAM" id="SSF50494">
    <property type="entry name" value="Trypsin-like serine proteases"/>
    <property type="match status" value="1"/>
</dbReference>
<dbReference type="SUPFAM" id="SSF56983">
    <property type="entry name" value="Viral glycoprotein, central and dimerisation domains"/>
    <property type="match status" value="1"/>
</dbReference>
<dbReference type="PROSITE" id="PS51527">
    <property type="entry name" value="FLAVIVIRUS_NS2B"/>
    <property type="match status" value="1"/>
</dbReference>
<dbReference type="PROSITE" id="PS51528">
    <property type="entry name" value="FLAVIVIRUS_NS3PRO"/>
    <property type="match status" value="1"/>
</dbReference>
<dbReference type="PROSITE" id="PS51192">
    <property type="entry name" value="HELICASE_ATP_BIND_1"/>
    <property type="match status" value="1"/>
</dbReference>
<dbReference type="PROSITE" id="PS51194">
    <property type="entry name" value="HELICASE_CTER"/>
    <property type="match status" value="1"/>
</dbReference>
<dbReference type="PROSITE" id="PS50507">
    <property type="entry name" value="RDRP_SSRNA_POS"/>
    <property type="match status" value="1"/>
</dbReference>
<dbReference type="PROSITE" id="PS51591">
    <property type="entry name" value="RNA_CAP01_NS5_MT"/>
    <property type="match status" value="1"/>
</dbReference>
<feature type="chain" id="PRO_0000405230" description="Genome polyprotein">
    <location>
        <begin position="1"/>
        <end position="3387"/>
    </location>
</feature>
<feature type="chain" id="PRO_0000268145" description="Capsid protein C" evidence="7">
    <location>
        <begin position="1"/>
        <end position="99"/>
    </location>
</feature>
<feature type="propeptide" id="PRO_0000268146" description="ER anchor for the capsid protein C, removed in mature form by serine protease NS3" evidence="7">
    <location>
        <begin position="100"/>
        <end position="113"/>
    </location>
</feature>
<feature type="chain" id="PRO_0000268147" description="Protein prM" evidence="7">
    <location>
        <begin position="114"/>
        <end position="279"/>
    </location>
</feature>
<feature type="chain" id="PRO_0000268148" description="Peptide pr" evidence="7">
    <location>
        <begin position="114"/>
        <end position="204"/>
    </location>
</feature>
<feature type="chain" id="PRO_0000268149" description="Small envelope protein M" evidence="7">
    <location>
        <begin position="205"/>
        <end position="279"/>
    </location>
</feature>
<feature type="chain" id="PRO_0000268150" description="Envelope protein E" evidence="7">
    <location>
        <begin position="280"/>
        <end position="774"/>
    </location>
</feature>
<feature type="chain" id="PRO_0000268151" description="Non-structural protein 1" evidence="7">
    <location>
        <begin position="775"/>
        <end position="1126"/>
    </location>
</feature>
<feature type="chain" id="PRO_0000268152" description="Non-structural protein 2A" evidence="7">
    <location>
        <begin position="1127"/>
        <end position="1344"/>
    </location>
</feature>
<feature type="chain" id="PRO_0000268153" description="Serine protease subunit NS2B" evidence="7">
    <location>
        <begin position="1345"/>
        <end position="1474"/>
    </location>
</feature>
<feature type="chain" id="PRO_0000268154" description="Serine protease NS3" evidence="7">
    <location>
        <begin position="1475"/>
        <end position="2092"/>
    </location>
</feature>
<feature type="chain" id="PRO_0000268155" description="Non-structural protein 4A" evidence="7">
    <location>
        <begin position="2093"/>
        <end position="2219"/>
    </location>
</feature>
<feature type="peptide" id="PRO_0000268156" description="Peptide 2k" evidence="7">
    <location>
        <begin position="2220"/>
        <end position="2242"/>
    </location>
</feature>
<feature type="chain" id="PRO_0000268157" description="Non-structural protein 4B" evidence="7">
    <location>
        <begin position="2243"/>
        <end position="2487"/>
    </location>
</feature>
<feature type="chain" id="PRO_0000268158" description="RNA-directed RNA polymerase NS5" evidence="7">
    <location>
        <begin position="2488"/>
        <end position="3387"/>
    </location>
</feature>
<feature type="topological domain" description="Cytoplasmic" evidence="12">
    <location>
        <begin position="1"/>
        <end position="100"/>
    </location>
</feature>
<feature type="transmembrane region" description="Helical" evidence="12">
    <location>
        <begin position="101"/>
        <end position="117"/>
    </location>
</feature>
<feature type="topological domain" description="Extracellular" evidence="12">
    <location>
        <begin position="118"/>
        <end position="237"/>
    </location>
</feature>
<feature type="transmembrane region" description="Helical" evidence="12">
    <location>
        <begin position="238"/>
        <end position="258"/>
    </location>
</feature>
<feature type="topological domain" description="Cytoplasmic" evidence="12">
    <location>
        <begin position="259"/>
        <end position="265"/>
    </location>
</feature>
<feature type="transmembrane region" description="Helical" evidence="12">
    <location>
        <begin position="266"/>
        <end position="279"/>
    </location>
</feature>
<feature type="topological domain" description="Extracellular" evidence="12">
    <location>
        <begin position="280"/>
        <end position="725"/>
    </location>
</feature>
<feature type="transmembrane region" description="Helical" evidence="12">
    <location>
        <begin position="726"/>
        <end position="746"/>
    </location>
</feature>
<feature type="topological domain" description="Cytoplasmic" evidence="12">
    <location>
        <begin position="747"/>
        <end position="751"/>
    </location>
</feature>
<feature type="transmembrane region" description="Helical" evidence="12">
    <location>
        <begin position="752"/>
        <end position="772"/>
    </location>
</feature>
<feature type="topological domain" description="Extracellular" evidence="12">
    <location>
        <begin position="773"/>
        <end position="1193"/>
    </location>
</feature>
<feature type="transmembrane region" description="Helical" evidence="12">
    <location>
        <begin position="1194"/>
        <end position="1218"/>
    </location>
</feature>
<feature type="topological domain" description="Lumenal" evidence="12">
    <location>
        <begin position="1219"/>
        <end position="1224"/>
    </location>
</feature>
<feature type="transmembrane region" description="Helical" evidence="12">
    <location>
        <begin position="1225"/>
        <end position="1243"/>
    </location>
</feature>
<feature type="topological domain" description="Cytoplasmic" evidence="12">
    <location>
        <begin position="1244"/>
        <end position="1267"/>
    </location>
</feature>
<feature type="transmembrane region" description="Helical" evidence="12">
    <location>
        <begin position="1268"/>
        <end position="1288"/>
    </location>
</feature>
<feature type="topological domain" description="Lumenal" evidence="12">
    <location>
        <position position="1289"/>
    </location>
</feature>
<feature type="transmembrane region" description="Helical" evidence="12">
    <location>
        <begin position="1290"/>
        <end position="1308"/>
    </location>
</feature>
<feature type="topological domain" description="Lumenal" evidence="12">
    <location>
        <begin position="1309"/>
        <end position="1316"/>
    </location>
</feature>
<feature type="transmembrane region" description="Helical" evidence="12">
    <location>
        <begin position="1317"/>
        <end position="1337"/>
    </location>
</feature>
<feature type="topological domain" description="Cytoplasmic" evidence="12">
    <location>
        <begin position="1338"/>
        <end position="1345"/>
    </location>
</feature>
<feature type="transmembrane region" description="Helical" evidence="12">
    <location>
        <begin position="1346"/>
        <end position="1366"/>
    </location>
</feature>
<feature type="topological domain" description="Lumenal" evidence="12">
    <location>
        <begin position="1367"/>
        <end position="1369"/>
    </location>
</feature>
<feature type="transmembrane region" description="Helical" evidence="12">
    <location>
        <begin position="1370"/>
        <end position="1390"/>
    </location>
</feature>
<feature type="topological domain" description="Cytoplasmic" evidence="12">
    <location>
        <begin position="1391"/>
        <end position="1444"/>
    </location>
</feature>
<feature type="intramembrane region" description="Helical" evidence="12">
    <location>
        <begin position="1445"/>
        <end position="1465"/>
    </location>
</feature>
<feature type="topological domain" description="Cytoplasmic" evidence="12">
    <location>
        <begin position="1466"/>
        <end position="2146"/>
    </location>
</feature>
<feature type="transmembrane region" description="Helical" evidence="12">
    <location>
        <begin position="2147"/>
        <end position="2167"/>
    </location>
</feature>
<feature type="topological domain" description="Lumenal" evidence="12">
    <location>
        <begin position="2168"/>
        <end position="2169"/>
    </location>
</feature>
<feature type="intramembrane region" description="Helical" evidence="12">
    <location>
        <begin position="2170"/>
        <end position="2190"/>
    </location>
</feature>
<feature type="topological domain" description="Lumenal" evidence="12">
    <location>
        <position position="2191"/>
    </location>
</feature>
<feature type="transmembrane region" description="Helical" evidence="12">
    <location>
        <begin position="2192"/>
        <end position="2212"/>
    </location>
</feature>
<feature type="topological domain" description="Cytoplasmic" evidence="12">
    <location>
        <begin position="2213"/>
        <end position="2225"/>
    </location>
</feature>
<feature type="transmembrane region" description="Helical; Note=Signal for NS4B" evidence="12">
    <location>
        <begin position="2226"/>
        <end position="2246"/>
    </location>
</feature>
<feature type="topological domain" description="Lumenal" evidence="12">
    <location>
        <begin position="2247"/>
        <end position="2270"/>
    </location>
</feature>
<feature type="intramembrane region" description="Helical" evidence="12">
    <location>
        <begin position="2271"/>
        <end position="2291"/>
    </location>
</feature>
<feature type="topological domain" description="Lumenal" evidence="12">
    <location>
        <begin position="2292"/>
        <end position="2301"/>
    </location>
</feature>
<feature type="intramembrane region" description="Helical" evidence="12">
    <location>
        <begin position="2302"/>
        <end position="2322"/>
    </location>
</feature>
<feature type="topological domain" description="Lumenal" evidence="12">
    <location>
        <begin position="2323"/>
        <end position="2343"/>
    </location>
</feature>
<feature type="transmembrane region" description="Helical" evidence="12">
    <location>
        <begin position="2344"/>
        <end position="2364"/>
    </location>
</feature>
<feature type="topological domain" description="Cytoplasmic" evidence="12">
    <location>
        <begin position="2365"/>
        <end position="2409"/>
    </location>
</feature>
<feature type="transmembrane region" description="Helical" evidence="12">
    <location>
        <begin position="2410"/>
        <end position="2430"/>
    </location>
</feature>
<feature type="topological domain" description="Lumenal" evidence="12">
    <location>
        <begin position="2431"/>
        <end position="2455"/>
    </location>
</feature>
<feature type="transmembrane region" description="Helical" evidence="12">
    <location>
        <begin position="2456"/>
        <end position="2476"/>
    </location>
</feature>
<feature type="topological domain" description="Cytoplasmic" evidence="12">
    <location>
        <begin position="2477"/>
        <end position="3387"/>
    </location>
</feature>
<feature type="domain" description="Peptidase S7" evidence="17">
    <location>
        <begin position="1475"/>
        <end position="1652"/>
    </location>
</feature>
<feature type="domain" description="Helicase ATP-binding" evidence="15">
    <location>
        <begin position="1654"/>
        <end position="1810"/>
    </location>
</feature>
<feature type="domain" description="Helicase C-terminal">
    <location>
        <begin position="1820"/>
        <end position="1987"/>
    </location>
</feature>
<feature type="domain" description="mRNA cap 0-1 NS5-type MT" evidence="18">
    <location>
        <begin position="2489"/>
        <end position="2751"/>
    </location>
</feature>
<feature type="domain" description="RdRp catalytic" evidence="14">
    <location>
        <begin position="3016"/>
        <end position="3166"/>
    </location>
</feature>
<feature type="region of interest" description="Hydrophobic; homodimerization of capsid protein C" evidence="7">
    <location>
        <begin position="36"/>
        <end position="71"/>
    </location>
</feature>
<feature type="region of interest" description="Fusion peptide" evidence="4">
    <location>
        <begin position="377"/>
        <end position="390"/>
    </location>
</feature>
<feature type="region of interest" description="Interacts with and activates NS3 protease" evidence="16">
    <location>
        <begin position="1397"/>
        <end position="1436"/>
    </location>
</feature>
<feature type="region of interest" description="Important for RNA-binding" evidence="5">
    <location>
        <begin position="1658"/>
        <end position="1661"/>
    </location>
</feature>
<feature type="short sequence motif" description="DEAH box" evidence="15">
    <location>
        <begin position="1758"/>
        <end position="1761"/>
    </location>
</feature>
<feature type="short sequence motif" description="SUMO-interacting motif" evidence="7">
    <location>
        <begin position="2564"/>
        <end position="2567"/>
    </location>
</feature>
<feature type="active site" description="Charge relay system; for serine protease NS3 activity" evidence="17">
    <location>
        <position position="1525"/>
    </location>
</feature>
<feature type="active site" description="Charge relay system; for serine protease NS3 activity" evidence="17">
    <location>
        <position position="1549"/>
    </location>
</feature>
<feature type="active site" description="Charge relay system; for serine protease NS3 activity" evidence="17">
    <location>
        <position position="1609"/>
    </location>
</feature>
<feature type="active site" description="For 2'-O-MTase activity" evidence="10">
    <location>
        <position position="2548"/>
    </location>
</feature>
<feature type="active site" description="For 2'-O-MTase activity" evidence="10">
    <location>
        <position position="2633"/>
    </location>
</feature>
<feature type="active site" description="For 2'-O-MTase activity" evidence="10">
    <location>
        <position position="2668"/>
    </location>
</feature>
<feature type="active site" description="For 2'-O-MTase activity" evidence="10">
    <location>
        <position position="2704"/>
    </location>
</feature>
<feature type="binding site" evidence="15">
    <location>
        <begin position="1667"/>
        <end position="1674"/>
    </location>
    <ligand>
        <name>ATP</name>
        <dbReference type="ChEBI" id="CHEBI:30616"/>
    </ligand>
</feature>
<feature type="binding site" evidence="18">
    <location>
        <position position="2543"/>
    </location>
    <ligand>
        <name>S-adenosyl-L-methionine</name>
        <dbReference type="ChEBI" id="CHEBI:59789"/>
    </ligand>
</feature>
<feature type="binding site" evidence="18">
    <location>
        <position position="2573"/>
    </location>
    <ligand>
        <name>S-adenosyl-L-methionine</name>
        <dbReference type="ChEBI" id="CHEBI:59789"/>
    </ligand>
</feature>
<feature type="binding site" evidence="18">
    <location>
        <position position="2574"/>
    </location>
    <ligand>
        <name>S-adenosyl-L-methionine</name>
        <dbReference type="ChEBI" id="CHEBI:59789"/>
    </ligand>
</feature>
<feature type="binding site" evidence="18">
    <location>
        <position position="2591"/>
    </location>
    <ligand>
        <name>S-adenosyl-L-methionine</name>
        <dbReference type="ChEBI" id="CHEBI:59789"/>
    </ligand>
</feature>
<feature type="binding site" evidence="18">
    <location>
        <position position="2592"/>
    </location>
    <ligand>
        <name>S-adenosyl-L-methionine</name>
        <dbReference type="ChEBI" id="CHEBI:59789"/>
    </ligand>
</feature>
<feature type="binding site" evidence="18">
    <location>
        <position position="2618"/>
    </location>
    <ligand>
        <name>S-adenosyl-L-methionine</name>
        <dbReference type="ChEBI" id="CHEBI:59789"/>
    </ligand>
</feature>
<feature type="binding site" evidence="18">
    <location>
        <position position="2619"/>
    </location>
    <ligand>
        <name>S-adenosyl-L-methionine</name>
        <dbReference type="ChEBI" id="CHEBI:59789"/>
    </ligand>
</feature>
<feature type="binding site" evidence="18">
    <location>
        <position position="2634"/>
    </location>
    <ligand>
        <name>S-adenosyl-L-methionine</name>
        <dbReference type="ChEBI" id="CHEBI:59789"/>
    </ligand>
</feature>
<feature type="binding site" evidence="18">
    <location>
        <position position="2706"/>
    </location>
    <ligand>
        <name>S-adenosyl-L-methionine</name>
        <dbReference type="ChEBI" id="CHEBI:59789"/>
    </ligand>
</feature>
<feature type="binding site" evidence="10">
    <location>
        <position position="2925"/>
    </location>
    <ligand>
        <name>Zn(2+)</name>
        <dbReference type="ChEBI" id="CHEBI:29105"/>
        <label>1</label>
    </ligand>
</feature>
<feature type="binding site" evidence="10">
    <location>
        <position position="2929"/>
    </location>
    <ligand>
        <name>Zn(2+)</name>
        <dbReference type="ChEBI" id="CHEBI:29105"/>
        <label>1</label>
    </ligand>
</feature>
<feature type="binding site" evidence="10">
    <location>
        <position position="2934"/>
    </location>
    <ligand>
        <name>Zn(2+)</name>
        <dbReference type="ChEBI" id="CHEBI:29105"/>
        <label>1</label>
    </ligand>
</feature>
<feature type="binding site" evidence="10">
    <location>
        <position position="2937"/>
    </location>
    <ligand>
        <name>Zn(2+)</name>
        <dbReference type="ChEBI" id="CHEBI:29105"/>
        <label>1</label>
    </ligand>
</feature>
<feature type="binding site" evidence="10">
    <location>
        <position position="3200"/>
    </location>
    <ligand>
        <name>Zn(2+)</name>
        <dbReference type="ChEBI" id="CHEBI:29105"/>
        <label>2</label>
    </ligand>
</feature>
<feature type="binding site" evidence="10">
    <location>
        <position position="3216"/>
    </location>
    <ligand>
        <name>Zn(2+)</name>
        <dbReference type="ChEBI" id="CHEBI:29105"/>
        <label>2</label>
    </ligand>
</feature>
<feature type="binding site" evidence="10">
    <location>
        <position position="3335"/>
    </location>
    <ligand>
        <name>Zn(2+)</name>
        <dbReference type="ChEBI" id="CHEBI:29105"/>
        <label>2</label>
    </ligand>
</feature>
<feature type="site" description="Cleavage; by viral protease NS3" evidence="7">
    <location>
        <begin position="99"/>
        <end position="100"/>
    </location>
</feature>
<feature type="site" description="Cleavage; by host signal peptidase" evidence="7">
    <location>
        <begin position="113"/>
        <end position="114"/>
    </location>
</feature>
<feature type="site" description="Cleavage; by host furin" evidence="7 12">
    <location>
        <begin position="204"/>
        <end position="205"/>
    </location>
</feature>
<feature type="site" description="Cleavage; by host signal peptidase" evidence="7">
    <location>
        <begin position="279"/>
        <end position="280"/>
    </location>
</feature>
<feature type="site" description="Cleavage; by host signal peptidase" evidence="7">
    <location>
        <begin position="774"/>
        <end position="775"/>
    </location>
</feature>
<feature type="site" description="Cleavage; by host" evidence="7">
    <location>
        <begin position="1126"/>
        <end position="1127"/>
    </location>
</feature>
<feature type="site" description="Cleavage; by viral protease NS3" evidence="7">
    <location>
        <begin position="1344"/>
        <end position="1345"/>
    </location>
</feature>
<feature type="site" description="Cleavage; by autolysis" evidence="7">
    <location>
        <begin position="1474"/>
        <end position="1475"/>
    </location>
</feature>
<feature type="site" description="Involved in NS3 ATPase and RTPase activities" evidence="3">
    <location>
        <position position="1931"/>
    </location>
</feature>
<feature type="site" description="Involved in NS3 ATPase and RTPase activities" evidence="3">
    <location>
        <position position="1934"/>
    </location>
</feature>
<feature type="site" description="Cleavage; by autolysis" evidence="7">
    <location>
        <begin position="2092"/>
        <end position="2093"/>
    </location>
</feature>
<feature type="site" description="Cleavage; by viral protease NS3" evidence="7">
    <location>
        <begin position="2219"/>
        <end position="2220"/>
    </location>
</feature>
<feature type="site" description="Cleavage; by host signal peptidase" evidence="7">
    <location>
        <begin position="2242"/>
        <end position="2243"/>
    </location>
</feature>
<feature type="site" description="Cleavage; by viral protease NS3" evidence="7">
    <location>
        <begin position="2487"/>
        <end position="2488"/>
    </location>
</feature>
<feature type="site" description="mRNA cap binding" evidence="18">
    <location>
        <position position="2501"/>
    </location>
</feature>
<feature type="site" description="mRNA cap binding; via carbonyl oxygen" evidence="18">
    <location>
        <position position="2504"/>
    </location>
</feature>
<feature type="site" description="mRNA cap binding" evidence="18">
    <location>
        <position position="2505"/>
    </location>
</feature>
<feature type="site" description="mRNA cap binding; via carbonyl oxygen" evidence="18">
    <location>
        <position position="2507"/>
    </location>
</feature>
<feature type="site" description="mRNA cap binding" evidence="18">
    <location>
        <position position="2512"/>
    </location>
</feature>
<feature type="site" description="mRNA cap binding" evidence="18">
    <location>
        <position position="2516"/>
    </location>
</feature>
<feature type="site" description="Essential for 2'-O-methyltransferase activity" evidence="18">
    <location>
        <position position="2548"/>
    </location>
</feature>
<feature type="site" description="Essential for 2'-O-methyltransferase and N-7 methyltransferase activity" evidence="18">
    <location>
        <position position="2633"/>
    </location>
</feature>
<feature type="site" description="mRNA cap binding" evidence="18">
    <location>
        <position position="2637"/>
    </location>
</feature>
<feature type="site" description="Essential for 2'-O-methyltransferase activity" evidence="18">
    <location>
        <position position="2668"/>
    </location>
</feature>
<feature type="site" description="mRNA cap binding" evidence="18">
    <location>
        <position position="2699"/>
    </location>
</feature>
<feature type="site" description="mRNA cap binding" evidence="18">
    <location>
        <position position="2701"/>
    </location>
</feature>
<feature type="site" description="Essential for 2'-O-methyltransferase activity" evidence="18">
    <location>
        <position position="2704"/>
    </location>
</feature>
<feature type="modified residue" description="N6-acetyllysine; by host" evidence="9">
    <location>
        <position position="1862"/>
    </location>
</feature>
<feature type="modified residue" description="Phosphoserine" evidence="1">
    <location>
        <position position="2543"/>
    </location>
</feature>
<feature type="glycosylation site" description="N-linked (GlcNAc...) asparagine; by host" evidence="13">
    <location>
        <position position="182"/>
    </location>
</feature>
<feature type="glycosylation site" description="N-linked (GlcNAc...) asparagine; by host" evidence="13">
    <location>
        <position position="346"/>
    </location>
</feature>
<feature type="glycosylation site" description="N-linked (GlcNAc...) asparagine; by host" evidence="13">
    <location>
        <position position="432"/>
    </location>
</feature>
<feature type="glycosylation site" description="N-linked (GlcNAc...) asparagine; by host" evidence="13">
    <location>
        <position position="904"/>
    </location>
</feature>
<feature type="glycosylation site" description="N-linked (GlcNAc...) asparagine; by host" evidence="13">
    <location>
        <position position="981"/>
    </location>
</feature>
<feature type="glycosylation site" description="N-linked (GlcNAc...) asparagine; by host" evidence="13">
    <location>
        <position position="2297"/>
    </location>
</feature>
<feature type="glycosylation site" description="N-linked (GlcNAc...) asparagine; by host" evidence="13">
    <location>
        <position position="2301"/>
    </location>
</feature>
<feature type="glycosylation site" description="N-linked (GlcNAc...) asparagine; by host" evidence="13">
    <location>
        <position position="2453"/>
    </location>
</feature>
<feature type="disulfide bond" evidence="6">
    <location>
        <begin position="282"/>
        <end position="309"/>
    </location>
</feature>
<feature type="disulfide bond" evidence="6">
    <location>
        <begin position="339"/>
        <end position="400"/>
    </location>
</feature>
<feature type="disulfide bond" evidence="6">
    <location>
        <begin position="353"/>
        <end position="384"/>
    </location>
</feature>
<feature type="disulfide bond" evidence="6">
    <location>
        <begin position="371"/>
        <end position="395"/>
    </location>
</feature>
<feature type="disulfide bond" evidence="6">
    <location>
        <begin position="464"/>
        <end position="564"/>
    </location>
</feature>
<feature type="disulfide bond" evidence="6">
    <location>
        <begin position="581"/>
        <end position="612"/>
    </location>
</feature>
<feature type="disulfide bond" evidence="6">
    <location>
        <begin position="778"/>
        <end position="789"/>
    </location>
</feature>
<feature type="disulfide bond" evidence="6">
    <location>
        <begin position="829"/>
        <end position="917"/>
    </location>
</feature>
<feature type="disulfide bond" evidence="6">
    <location>
        <begin position="953"/>
        <end position="997"/>
    </location>
</feature>
<feature type="disulfide bond" evidence="6">
    <location>
        <begin position="1054"/>
        <end position="1103"/>
    </location>
</feature>
<feature type="disulfide bond" evidence="6">
    <location>
        <begin position="1065"/>
        <end position="1087"/>
    </location>
</feature>
<feature type="disulfide bond" evidence="6">
    <location>
        <begin position="1086"/>
        <end position="1090"/>
    </location>
</feature>
<comment type="function">
    <molecule>Capsid protein C</molecule>
    <text evidence="6">Plays a role in virus budding by binding to the cell membrane and gathering the viral RNA into a nucleocapsid that forms the core of a mature virus particle. During virus entry, may induce genome penetration into the host cytoplasm after hemifusion induced by the surface proteins. Can migrate to the cell nucleus where it modulates host functions. Overcomes the anti-viral effects of host EXOC1 by sequestering and degrading the latter through the proteasome degradation pathway.</text>
</comment>
<comment type="function">
    <molecule>Capsid protein C</molecule>
    <text evidence="1">Inhibits RNA silencing by interfering with host Dicer.</text>
</comment>
<comment type="function">
    <molecule>Peptide pr</molecule>
    <text evidence="6">Prevents premature fusion activity of envelope proteins in trans-Golgi by binding to envelope protein E at pH6.0. After virion release in extracellular space, gets dissociated from E dimers.</text>
</comment>
<comment type="function">
    <molecule>Protein prM</molecule>
    <text evidence="6">Acts as a chaperone for envelope protein E during intracellular virion assembly by masking and inactivating envelope protein E fusion peptide. prM is the only viral peptide matured by host furin in the trans-Golgi network probably to avoid catastrophic activation of the viral fusion activity in acidic Golgi compartment prior to virion release. prM-E cleavage is inefficient, and many virions are only partially matured. These uncleaved prM would play a role in immune evasion.</text>
</comment>
<comment type="function">
    <molecule>Small envelope protein M</molecule>
    <text evidence="6">May play a role in virus budding. Exerts cytotoxic effects by activating a mitochondrial apoptotic pathway through M ectodomain. May display a viroporin activity.</text>
</comment>
<comment type="function">
    <molecule>Envelope protein E</molecule>
    <text evidence="6">Binds to host cell surface receptor and mediates fusion between viral and cellular membranes. Envelope protein is synthesized in the endoplasmic reticulum in the form of heterodimer with protein prM. They play a role in virion budding in the ER, and the newly formed immature particle is covered with 60 spikes composed of heterodimer between precursor prM and envelope protein E. The virion is transported to the Golgi apparatus where the low pH causes dissociation of PrM-E heterodimers and formation of E homodimers. prM-E cleavage is inefficient, and many virions are only partially matured. These uncleaved prM would play a role in immune evasion.</text>
</comment>
<comment type="function">
    <molecule>Non-structural protein 1</molecule>
    <text evidence="11">Involved in immune evasion, pathogenesis and viral replication. Once cleaved off the polyprotein, is targeted to three destinations: the viral replication cycle, the plasma membrane and the extracellular compartment. Essential for viral replication. Required for formation of the replication complex and recruitment of other non-structural proteins to the ER-derived membrane structures. Excreted as a hexameric lipoparticle that plays a role against host immune response. Antagonizing the complement function. Binds to the host macrophages and dendritic cells. Inhibits signal transduction originating from Toll-like receptor 3 (TLR3).</text>
</comment>
<comment type="function">
    <molecule>Non-structural protein 1</molecule>
    <text evidence="6">Disrupts the host endothelial glycocalyx layer of host pulmonary microvascular endothelial cells, inducing degradation of sialic acid and shedding of heparan sulfate proteoglycans. NS1 induces expression of sialidases, heparanase, and activates cathepsin L, which activates heparanase via enzymatic cleavage. These effects are probably linked to the endothelial hyperpermeability observed in severe dengue disease.</text>
</comment>
<comment type="function">
    <molecule>Non-structural protein 2A</molecule>
    <text evidence="6">Component of the viral RNA replication complex that functions in virion assembly and antagonizes the host immune response.</text>
</comment>
<comment type="function">
    <molecule>Serine protease subunit NS2B</molecule>
    <text evidence="6 16">Required cofactor for the serine protease function of NS3. May have membrane-destabilizing activity and form viroporins (By similarity).</text>
</comment>
<comment type="function">
    <molecule>Serine protease NS3</molecule>
    <text evidence="17">Displays three enzymatic activities: serine protease, NTPase and RNA helicase. NS3 serine protease, in association with NS2B, performs its autocleavage and cleaves the polyprotein at dibasic sites in the cytoplasm: C-prM, NS2A-NS2B, NS2B-NS3, NS3-NS4A, NS4A-2K and NS4B-NS5. NS3 RNA helicase binds RNA and unwinds dsRNA in the 3' to 5' direction.</text>
</comment>
<comment type="function">
    <molecule>Non-structural protein 4A</molecule>
    <text evidence="6 8 11">Regulates the ATPase activity of the NS3 helicase activity. NS4A allows NS3 helicase to conserve energy during unwinding. Plays a role in the inhibition of the host innate immune response. Interacts with host MAVS and thereby prevents the interaction between RIGI and MAVS. In turn, IFN-beta production is impaired. Interacts with host AUP1 which mediates induction of lipophagy in host cells and facilitates production of virus progeny particles (By similarity).</text>
</comment>
<comment type="function">
    <molecule>Peptide 2k</molecule>
    <text evidence="6">Functions as a signal peptide for NS4B and is required for the interferon antagonism activity of the latter.</text>
</comment>
<comment type="function">
    <molecule>Non-structural protein 4B</molecule>
    <text evidence="11">Induces the formation of ER-derived membrane vesicles where the viral replication takes place. Inhibits interferon (IFN)-induced host STAT1 phosphorylation and nuclear translocation, thereby preventing the establishment of cellular antiviral state by blocking the IFN-alpha/beta pathway.</text>
</comment>
<comment type="function">
    <molecule>RNA-directed RNA polymerase NS5</molecule>
    <text evidence="2 6">Replicates the viral (+) and (-) RNA genome, and performs the capping of genomes in the cytoplasm. NS5 methylates viral RNA cap at guanine N-7 and ribose 2'-O positions. Besides its role in RNA genome replication, also prevents the establishment of cellular antiviral state by blocking the interferon-alpha/beta (IFN-alpha/beta) signaling pathway. Inhibits host TYK2 and STAT2 phosphorylation, thereby preventing activation of JAK-STAT signaling pathway (By similarity). May reduce immune responses by preventing the recruitment of the host PAF1 complex to interferon-responsive genes (By similarity).</text>
</comment>
<comment type="catalytic activity">
    <reaction>
        <text>Selective hydrolysis of -Xaa-Xaa-|-Yaa- bonds in which each of the Xaa can be either Arg or Lys and Yaa can be either Ser or Ala.</text>
        <dbReference type="EC" id="3.4.21.91"/>
    </reaction>
</comment>
<comment type="catalytic activity">
    <reaction evidence="14">
        <text>RNA(n) + a ribonucleoside 5'-triphosphate = RNA(n+1) + diphosphate</text>
        <dbReference type="Rhea" id="RHEA:21248"/>
        <dbReference type="Rhea" id="RHEA-COMP:14527"/>
        <dbReference type="Rhea" id="RHEA-COMP:17342"/>
        <dbReference type="ChEBI" id="CHEBI:33019"/>
        <dbReference type="ChEBI" id="CHEBI:61557"/>
        <dbReference type="ChEBI" id="CHEBI:140395"/>
        <dbReference type="EC" id="2.7.7.48"/>
    </reaction>
</comment>
<comment type="catalytic activity">
    <reaction>
        <text>a ribonucleoside 5'-triphosphate + H2O = a ribonucleoside 5'-diphosphate + phosphate + H(+)</text>
        <dbReference type="Rhea" id="RHEA:23680"/>
        <dbReference type="ChEBI" id="CHEBI:15377"/>
        <dbReference type="ChEBI" id="CHEBI:15378"/>
        <dbReference type="ChEBI" id="CHEBI:43474"/>
        <dbReference type="ChEBI" id="CHEBI:57930"/>
        <dbReference type="ChEBI" id="CHEBI:61557"/>
        <dbReference type="EC" id="3.6.1.15"/>
    </reaction>
</comment>
<comment type="catalytic activity">
    <reaction>
        <text>ATP + H2O = ADP + phosphate + H(+)</text>
        <dbReference type="Rhea" id="RHEA:13065"/>
        <dbReference type="ChEBI" id="CHEBI:15377"/>
        <dbReference type="ChEBI" id="CHEBI:15378"/>
        <dbReference type="ChEBI" id="CHEBI:30616"/>
        <dbReference type="ChEBI" id="CHEBI:43474"/>
        <dbReference type="ChEBI" id="CHEBI:456216"/>
        <dbReference type="EC" id="3.6.4.13"/>
    </reaction>
</comment>
<comment type="catalytic activity">
    <reaction evidence="18">
        <text>a 5'-end (5'-triphosphoguanosine)-ribonucleoside in mRNA + S-adenosyl-L-methionine = a 5'-end (N(7)-methyl 5'-triphosphoguanosine)-ribonucleoside in mRNA + S-adenosyl-L-homocysteine</text>
        <dbReference type="Rhea" id="RHEA:67008"/>
        <dbReference type="Rhea" id="RHEA-COMP:17166"/>
        <dbReference type="Rhea" id="RHEA-COMP:17167"/>
        <dbReference type="ChEBI" id="CHEBI:57856"/>
        <dbReference type="ChEBI" id="CHEBI:59789"/>
        <dbReference type="ChEBI" id="CHEBI:156461"/>
        <dbReference type="ChEBI" id="CHEBI:167617"/>
        <dbReference type="EC" id="2.1.1.56"/>
    </reaction>
</comment>
<comment type="catalytic activity">
    <reaction evidence="18">
        <text>a 5'-end (N(7)-methyl 5'-triphosphoguanosine)-ribonucleoside in mRNA + S-adenosyl-L-methionine = a 5'-end (N(7)-methyl 5'-triphosphoguanosine)-(2'-O-methyl-ribonucleoside) in mRNA + S-adenosyl-L-homocysteine + H(+)</text>
        <dbReference type="Rhea" id="RHEA:67020"/>
        <dbReference type="Rhea" id="RHEA-COMP:17167"/>
        <dbReference type="Rhea" id="RHEA-COMP:17168"/>
        <dbReference type="ChEBI" id="CHEBI:15378"/>
        <dbReference type="ChEBI" id="CHEBI:57856"/>
        <dbReference type="ChEBI" id="CHEBI:59789"/>
        <dbReference type="ChEBI" id="CHEBI:156461"/>
        <dbReference type="ChEBI" id="CHEBI:167609"/>
        <dbReference type="EC" id="2.1.1.57"/>
    </reaction>
</comment>
<comment type="subunit">
    <molecule>Capsid protein C</molecule>
    <text evidence="6">Homodimer. Interacts (via N-terminus) with host EXOC1 (via C-terminus); this interaction results in EXOC1 degradation through the proteasome degradation pathway.</text>
</comment>
<comment type="subunit">
    <molecule>Protein prM</molecule>
    <text evidence="6">Forms heterodimers with envelope protein E in the endoplasmic reticulum and Golgi.</text>
</comment>
<comment type="subunit">
    <molecule>Envelope protein E</molecule>
    <text evidence="6">Homodimer; in the endoplasmic reticulum and Golgi. Interacts with protein prM. Interacts with non-structural protein 1.</text>
</comment>
<comment type="subunit">
    <molecule>Non-structural protein 1</molecule>
    <text evidence="6">Homodimer; Homohexamer when secreted. Interacts with envelope protein E.</text>
</comment>
<comment type="subunit">
    <molecule>Non-structural protein 2A</molecule>
    <text evidence="6">Interacts (via N-terminus) with serine protease NS3.</text>
</comment>
<comment type="subunit">
    <molecule>Serine protease subunit NS2B</molecule>
    <text evidence="6">Forms a heterodimer with serine protease NS3. May form homooligomers.</text>
</comment>
<comment type="subunit">
    <molecule>Serine protease NS3</molecule>
    <text evidence="6">Forms a heterodimer with NS2B. Interacts with NS4B. Interacts with unphosphorylated RNA-directed RNA polymerase NS5; this interaction stimulates RNA-directed RNA polymerase NS5 guanylyltransferase activity. Interacts with host SHFL.</text>
</comment>
<comment type="subunit">
    <molecule>Non-structural protein 4A</molecule>
    <text evidence="6 8">Interacts with host MAVS; this interaction inhibits the synthesis of IFN-beta. Interacts with host SHFL. Interacts with host AUP1; the interaction occurs in the presence of Dengue virus NS4B and induces lipophagy which facilitates production of virus progeny particles (By similarity).</text>
</comment>
<comment type="subunit">
    <molecule>Non-structural protein 4B</molecule>
    <text evidence="6">Interacts with serine protease NS3.</text>
</comment>
<comment type="subunit">
    <molecule>RNA-directed RNA polymerase NS5</molecule>
    <text evidence="2 6">Homodimer. Interacts with host STAT2; this interaction inhibits the phosphorylation of the latter, and, when all viral proteins are present (polyprotein), targets STAT2 for degradation. Interacts with serine protease NS3 (By similarity). Interacts with host PAF1 complex; the interaction may prevent the recruitment of the PAF1 complex to interferon-responsive genes, and thus reduces the immune response (By similarity).</text>
</comment>
<comment type="subcellular location">
    <molecule>Capsid protein C</molecule>
    <subcellularLocation>
        <location evidence="6">Virion</location>
    </subcellularLocation>
    <subcellularLocation>
        <location evidence="6">Host nucleus</location>
    </subcellularLocation>
    <subcellularLocation>
        <location evidence="6">Host cytoplasm</location>
    </subcellularLocation>
    <subcellularLocation>
        <location evidence="6">Host cytoplasm</location>
        <location evidence="6">Host perinuclear region</location>
    </subcellularLocation>
</comment>
<comment type="subcellular location">
    <molecule>Peptide pr</molecule>
    <subcellularLocation>
        <location evidence="6">Secreted</location>
    </subcellularLocation>
</comment>
<comment type="subcellular location">
    <molecule>Small envelope protein M</molecule>
    <subcellularLocation>
        <location evidence="6">Virion membrane</location>
        <topology evidence="12">Multi-pass membrane protein</topology>
    </subcellularLocation>
    <subcellularLocation>
        <location evidence="6">Host endoplasmic reticulum membrane</location>
        <topology evidence="12">Multi-pass membrane protein</topology>
    </subcellularLocation>
</comment>
<comment type="subcellular location">
    <molecule>Envelope protein E</molecule>
    <subcellularLocation>
        <location evidence="6">Virion membrane</location>
        <topology evidence="12">Multi-pass membrane protein</topology>
    </subcellularLocation>
    <subcellularLocation>
        <location evidence="6">Host endoplasmic reticulum membrane</location>
        <topology evidence="12">Multi-pass membrane protein</topology>
    </subcellularLocation>
</comment>
<comment type="subcellular location">
    <molecule>Non-structural protein 1</molecule>
    <subcellularLocation>
        <location evidence="6">Secreted</location>
    </subcellularLocation>
    <subcellularLocation>
        <location>Host endoplasmic reticulum membrane</location>
        <topology>Peripheral membrane protein</topology>
        <orientation evidence="6">Lumenal side</orientation>
    </subcellularLocation>
    <text evidence="11">Located in RE-derived vesicles hosting the replication complex.</text>
</comment>
<comment type="subcellular location">
    <molecule>Non-structural protein 2A</molecule>
    <subcellularLocation>
        <location evidence="6">Host endoplasmic reticulum membrane</location>
        <topology evidence="6">Multi-pass membrane protein</topology>
    </subcellularLocation>
</comment>
<comment type="subcellular location">
    <molecule>Serine protease subunit NS2B</molecule>
    <subcellularLocation>
        <location>Host endoplasmic reticulum membrane</location>
        <topology evidence="6">Multi-pass membrane protein</topology>
    </subcellularLocation>
</comment>
<comment type="subcellular location">
    <molecule>Serine protease NS3</molecule>
    <subcellularLocation>
        <location evidence="17">Host endoplasmic reticulum membrane</location>
        <topology evidence="17">Peripheral membrane protein</topology>
        <orientation evidence="17">Cytoplasmic side</orientation>
    </subcellularLocation>
    <text evidence="17">Remains non-covalently associated to serine protease subunit NS2B.</text>
</comment>
<comment type="subcellular location">
    <molecule>Non-structural protein 4A</molecule>
    <subcellularLocation>
        <location evidence="6">Host endoplasmic reticulum membrane</location>
        <topology evidence="6">Multi-pass membrane protein</topology>
    </subcellularLocation>
    <subcellularLocation>
        <location evidence="6">Host mitochondrion</location>
    </subcellularLocation>
    <text evidence="6">Located in RE-associated vesicles hosting the replication complex. Interacts with host MAVS in the mitochondrion-associated endoplasmic reticulum membranes.</text>
</comment>
<comment type="subcellular location">
    <molecule>Non-structural protein 4B</molecule>
    <subcellularLocation>
        <location evidence="6">Host endoplasmic reticulum membrane</location>
        <topology evidence="6">Multi-pass membrane protein</topology>
    </subcellularLocation>
    <text evidence="11">Located in RE-derived vesicles hosting the replication complex.</text>
</comment>
<comment type="subcellular location">
    <molecule>RNA-directed RNA polymerase NS5</molecule>
    <subcellularLocation>
        <location>Host endoplasmic reticulum membrane</location>
        <topology>Peripheral membrane protein</topology>
        <orientation>Cytoplasmic side</orientation>
    </subcellularLocation>
    <subcellularLocation>
        <location evidence="2 6">Host nucleus</location>
    </subcellularLocation>
    <text evidence="6">Located in RE-associated vesicles hosting the replication complex. NS5 protein is mainly localized in the nucleus rather than in ER vesicles, especially in the DENV 2, 3, 4 serotypes.</text>
</comment>
<comment type="domain">
    <text evidence="6">The transmembrane domains of the small envelope protein M and envelope protein E contain an endoplasmic reticulum retention signal.</text>
</comment>
<comment type="PTM">
    <molecule>Genome polyprotein</molecule>
    <text evidence="6">Specific enzymatic cleavages in vivo yield mature proteins. Cleavages in the lumen of endoplasmic reticulum are performed by host signal peptidase, whereas cleavages in the cytoplasmic side are performed by serine protease NS3. Signal cleavage at the 2K-4B site requires a prior NS3 protease-mediated cleavage at the 4A-2K site.</text>
</comment>
<comment type="PTM">
    <molecule>Protein prM</molecule>
    <text evidence="6">Cleaved in post-Golgi vesicles by a host furin, releasing the mature small envelope protein M, and peptide pr. This cleavage is incomplete as up to 30% of viral particles still carry uncleaved prM.</text>
</comment>
<comment type="PTM">
    <molecule>Envelope protein E</molecule>
    <text evidence="6">N-glycosylated.</text>
</comment>
<comment type="PTM">
    <molecule>Non-structural protein 1</molecule>
    <text evidence="6">N-glycosylated. The excreted form is glycosylated and this is required for efficient secretion of the protein from infected cells.</text>
</comment>
<comment type="PTM">
    <molecule>Serine protease NS3</molecule>
    <text evidence="9">Acetylated by host KAT5. Acetylation modulates NS3 RNA-binding and unwinding activities and plays an important positive role for viral replication.</text>
</comment>
<comment type="PTM">
    <molecule>RNA-directed RNA polymerase NS5</molecule>
    <text evidence="7">Sumoylation of RNA-directed RNA polymerase NS5 increases NS5 protein stability allowing proper viral RNA replication.</text>
</comment>
<comment type="PTM">
    <molecule>RNA-directed RNA polymerase NS5</molecule>
    <text evidence="6">Phosphorylated on serines residues. This phosphorylation may trigger NS5 nuclear localization.</text>
</comment>
<comment type="similarity">
    <text evidence="18">In the N-terminal section; belongs to the class I-like SAM-binding methyltransferase superfamily. mRNA cap 0-1 NS5-type methyltransferase family.</text>
</comment>
<organism>
    <name type="scientific">Dengue virus type 4 (strain Thailand/0476/1997)</name>
    <name type="common">DENV-4</name>
    <dbReference type="NCBI Taxonomy" id="408689"/>
    <lineage>
        <taxon>Viruses</taxon>
        <taxon>Riboviria</taxon>
        <taxon>Orthornavirae</taxon>
        <taxon>Kitrinoviricota</taxon>
        <taxon>Flasuviricetes</taxon>
        <taxon>Amarillovirales</taxon>
        <taxon>Flaviviridae</taxon>
        <taxon>Orthoflavivirus</taxon>
        <taxon>Orthoflavivirus denguei</taxon>
        <taxon>Dengue virus</taxon>
    </lineage>
</organism>
<accession>Q2YHF2</accession>